<proteinExistence type="inferred from homology"/>
<organism>
    <name type="scientific">Rhodopseudomonas palustris (strain HaA2)</name>
    <dbReference type="NCBI Taxonomy" id="316058"/>
    <lineage>
        <taxon>Bacteria</taxon>
        <taxon>Pseudomonadati</taxon>
        <taxon>Pseudomonadota</taxon>
        <taxon>Alphaproteobacteria</taxon>
        <taxon>Hyphomicrobiales</taxon>
        <taxon>Nitrobacteraceae</taxon>
        <taxon>Rhodopseudomonas</taxon>
    </lineage>
</organism>
<protein>
    <recommendedName>
        <fullName evidence="1">UPF0262 protein RPB_4349</fullName>
    </recommendedName>
</protein>
<sequence length="163" mass="18383">MSNPQPDDSNNRIVAVTLDEESIGRSGPDIEHERAIAIYDLVEKNLFAPEGAGEGPFTLHIGITGSRLMFDIRREDGTPVVAHLLSLSPFRRIVKDYFMICDSYYQAIRTATPDKIEAIDMGRRGIHDEGSRTLQERLAGKVRIDFETARRLFTLISVLHWKG</sequence>
<feature type="chain" id="PRO_0000314214" description="UPF0262 protein RPB_4349">
    <location>
        <begin position="1"/>
        <end position="163"/>
    </location>
</feature>
<keyword id="KW-1185">Reference proteome</keyword>
<gene>
    <name type="ordered locus">RPB_4349</name>
</gene>
<reference key="1">
    <citation type="submission" date="2006-01" db="EMBL/GenBank/DDBJ databases">
        <title>Complete sequence of Rhodopseudomonas palustris HaA2.</title>
        <authorList>
            <consortium name="US DOE Joint Genome Institute"/>
            <person name="Copeland A."/>
            <person name="Lucas S."/>
            <person name="Lapidus A."/>
            <person name="Barry K."/>
            <person name="Detter J.C."/>
            <person name="Glavina T."/>
            <person name="Hammon N."/>
            <person name="Israni S."/>
            <person name="Pitluck S."/>
            <person name="Chain P."/>
            <person name="Malfatti S."/>
            <person name="Shin M."/>
            <person name="Vergez L."/>
            <person name="Schmutz J."/>
            <person name="Larimer F."/>
            <person name="Land M."/>
            <person name="Hauser L."/>
            <person name="Pelletier D.A."/>
            <person name="Kyrpides N."/>
            <person name="Anderson I."/>
            <person name="Oda Y."/>
            <person name="Harwood C.S."/>
            <person name="Richardson P."/>
        </authorList>
    </citation>
    <scope>NUCLEOTIDE SEQUENCE [LARGE SCALE GENOMIC DNA]</scope>
    <source>
        <strain>HaA2</strain>
    </source>
</reference>
<evidence type="ECO:0000255" key="1">
    <source>
        <dbReference type="HAMAP-Rule" id="MF_00678"/>
    </source>
</evidence>
<accession>Q2IRX4</accession>
<dbReference type="EMBL" id="CP000250">
    <property type="protein sequence ID" value="ABD09036.1"/>
    <property type="molecule type" value="Genomic_DNA"/>
</dbReference>
<dbReference type="RefSeq" id="WP_011443220.1">
    <property type="nucleotide sequence ID" value="NC_007778.1"/>
</dbReference>
<dbReference type="STRING" id="316058.RPB_4349"/>
<dbReference type="KEGG" id="rpb:RPB_4349"/>
<dbReference type="eggNOG" id="COG5328">
    <property type="taxonomic scope" value="Bacteria"/>
</dbReference>
<dbReference type="HOGENOM" id="CLU_112904_0_0_5"/>
<dbReference type="OrthoDB" id="9798434at2"/>
<dbReference type="Proteomes" id="UP000008809">
    <property type="component" value="Chromosome"/>
</dbReference>
<dbReference type="HAMAP" id="MF_00678">
    <property type="entry name" value="UPF0262"/>
    <property type="match status" value="1"/>
</dbReference>
<dbReference type="InterPro" id="IPR008321">
    <property type="entry name" value="UCP032146"/>
</dbReference>
<dbReference type="NCBIfam" id="NF002769">
    <property type="entry name" value="PRK02853.1"/>
    <property type="match status" value="1"/>
</dbReference>
<dbReference type="Pfam" id="PF06793">
    <property type="entry name" value="UPF0262"/>
    <property type="match status" value="1"/>
</dbReference>
<dbReference type="PIRSF" id="PIRSF032146">
    <property type="entry name" value="UCP032146"/>
    <property type="match status" value="1"/>
</dbReference>
<comment type="similarity">
    <text evidence="1">Belongs to the UPF0262 family.</text>
</comment>
<name>Y4349_RHOP2</name>